<reference key="1">
    <citation type="journal article" date="1996" name="Gene">
        <title>Overproduction of mycobacterial ribosomal protein S13 induces catalase/peroxidase activity and hypersensitivity to isoniazid in Mycobacterium smegmatis.</title>
        <authorList>
            <person name="Dubnau E."/>
            <person name="Soares S."/>
            <person name="Huang T.J."/>
            <person name="Jacobs W.R. Jr."/>
        </authorList>
    </citation>
    <scope>NUCLEOTIDE SEQUENCE [GENOMIC DNA]</scope>
    <source>
        <strain>BCG</strain>
    </source>
</reference>
<reference key="2">
    <citation type="journal article" date="2003" name="Proc. Natl. Acad. Sci. U.S.A.">
        <title>The complete genome sequence of Mycobacterium bovis.</title>
        <authorList>
            <person name="Garnier T."/>
            <person name="Eiglmeier K."/>
            <person name="Camus J.-C."/>
            <person name="Medina N."/>
            <person name="Mansoor H."/>
            <person name="Pryor M."/>
            <person name="Duthoy S."/>
            <person name="Grondin S."/>
            <person name="Lacroix C."/>
            <person name="Monsempe C."/>
            <person name="Simon S."/>
            <person name="Harris B."/>
            <person name="Atkin R."/>
            <person name="Doggett J."/>
            <person name="Mayes R."/>
            <person name="Keating L."/>
            <person name="Wheeler P.R."/>
            <person name="Parkhill J."/>
            <person name="Barrell B.G."/>
            <person name="Cole S.T."/>
            <person name="Gordon S.V."/>
            <person name="Hewinson R.G."/>
        </authorList>
    </citation>
    <scope>NUCLEOTIDE SEQUENCE [LARGE SCALE GENOMIC DNA]</scope>
    <source>
        <strain>ATCC BAA-935 / AF2122/97</strain>
    </source>
</reference>
<reference key="3">
    <citation type="journal article" date="2017" name="Genome Announc.">
        <title>Updated reference genome sequence and annotation of Mycobacterium bovis AF2122/97.</title>
        <authorList>
            <person name="Malone K.M."/>
            <person name="Farrell D."/>
            <person name="Stuber T.P."/>
            <person name="Schubert O.T."/>
            <person name="Aebersold R."/>
            <person name="Robbe-Austerman S."/>
            <person name="Gordon S.V."/>
        </authorList>
    </citation>
    <scope>NUCLEOTIDE SEQUENCE [LARGE SCALE GENOMIC DNA]</scope>
    <scope>GENOME REANNOTATION</scope>
    <source>
        <strain>ATCC BAA-935 / AF2122/97</strain>
    </source>
</reference>
<protein>
    <recommendedName>
        <fullName evidence="1">Large ribosomal subunit protein bL36</fullName>
    </recommendedName>
    <alternativeName>
        <fullName>50S ribosomal protein L36</fullName>
    </alternativeName>
    <alternativeName>
        <fullName>Ribosomal protein B</fullName>
    </alternativeName>
</protein>
<name>RL36_MYCBO</name>
<sequence>MKVNPSVKPICDKCRLIRRHGRVMVICSDPRHKQRQG</sequence>
<proteinExistence type="inferred from homology"/>
<feature type="chain" id="PRO_0000126222" description="Large ribosomal subunit protein bL36">
    <location>
        <begin position="1"/>
        <end position="37"/>
    </location>
</feature>
<keyword id="KW-1185">Reference proteome</keyword>
<keyword id="KW-0687">Ribonucleoprotein</keyword>
<keyword id="KW-0689">Ribosomal protein</keyword>
<organism>
    <name type="scientific">Mycobacterium bovis (strain ATCC BAA-935 / AF2122/97)</name>
    <dbReference type="NCBI Taxonomy" id="233413"/>
    <lineage>
        <taxon>Bacteria</taxon>
        <taxon>Bacillati</taxon>
        <taxon>Actinomycetota</taxon>
        <taxon>Actinomycetes</taxon>
        <taxon>Mycobacteriales</taxon>
        <taxon>Mycobacteriaceae</taxon>
        <taxon>Mycobacterium</taxon>
        <taxon>Mycobacterium tuberculosis complex</taxon>
    </lineage>
</organism>
<dbReference type="EMBL" id="U15140">
    <property type="protein sequence ID" value="AAB17596.1"/>
    <property type="molecule type" value="Genomic_DNA"/>
</dbReference>
<dbReference type="EMBL" id="LT708304">
    <property type="protein sequence ID" value="SIU02118.1"/>
    <property type="molecule type" value="Genomic_DNA"/>
</dbReference>
<dbReference type="RefSeq" id="NP_857130.1">
    <property type="nucleotide sequence ID" value="NC_002945.3"/>
</dbReference>
<dbReference type="RefSeq" id="WP_003418367.1">
    <property type="nucleotide sequence ID" value="NC_002945.4"/>
</dbReference>
<dbReference type="SMR" id="P0A5W7"/>
<dbReference type="GeneID" id="45427450"/>
<dbReference type="KEGG" id="mbo:BQ2027_MB3490C"/>
<dbReference type="PATRIC" id="fig|233413.5.peg.3827"/>
<dbReference type="Proteomes" id="UP000001419">
    <property type="component" value="Chromosome"/>
</dbReference>
<dbReference type="GO" id="GO:0005737">
    <property type="term" value="C:cytoplasm"/>
    <property type="evidence" value="ECO:0007669"/>
    <property type="project" value="UniProtKB-ARBA"/>
</dbReference>
<dbReference type="GO" id="GO:1990904">
    <property type="term" value="C:ribonucleoprotein complex"/>
    <property type="evidence" value="ECO:0007669"/>
    <property type="project" value="UniProtKB-KW"/>
</dbReference>
<dbReference type="GO" id="GO:0005840">
    <property type="term" value="C:ribosome"/>
    <property type="evidence" value="ECO:0007669"/>
    <property type="project" value="UniProtKB-KW"/>
</dbReference>
<dbReference type="GO" id="GO:0003735">
    <property type="term" value="F:structural constituent of ribosome"/>
    <property type="evidence" value="ECO:0007669"/>
    <property type="project" value="InterPro"/>
</dbReference>
<dbReference type="GO" id="GO:0006412">
    <property type="term" value="P:translation"/>
    <property type="evidence" value="ECO:0007669"/>
    <property type="project" value="UniProtKB-UniRule"/>
</dbReference>
<dbReference type="HAMAP" id="MF_00251">
    <property type="entry name" value="Ribosomal_bL36"/>
    <property type="match status" value="1"/>
</dbReference>
<dbReference type="InterPro" id="IPR000473">
    <property type="entry name" value="Ribosomal_bL36"/>
</dbReference>
<dbReference type="InterPro" id="IPR035977">
    <property type="entry name" value="Ribosomal_bL36_sp"/>
</dbReference>
<dbReference type="NCBIfam" id="TIGR01022">
    <property type="entry name" value="rpmJ_bact"/>
    <property type="match status" value="1"/>
</dbReference>
<dbReference type="PANTHER" id="PTHR42888">
    <property type="entry name" value="50S RIBOSOMAL PROTEIN L36, CHLOROPLASTIC"/>
    <property type="match status" value="1"/>
</dbReference>
<dbReference type="PANTHER" id="PTHR42888:SF1">
    <property type="entry name" value="LARGE RIBOSOMAL SUBUNIT PROTEIN BL36C"/>
    <property type="match status" value="1"/>
</dbReference>
<dbReference type="Pfam" id="PF00444">
    <property type="entry name" value="Ribosomal_L36"/>
    <property type="match status" value="1"/>
</dbReference>
<dbReference type="SUPFAM" id="SSF57840">
    <property type="entry name" value="Ribosomal protein L36"/>
    <property type="match status" value="1"/>
</dbReference>
<dbReference type="PROSITE" id="PS00828">
    <property type="entry name" value="RIBOSOMAL_L36"/>
    <property type="match status" value="1"/>
</dbReference>
<evidence type="ECO:0000305" key="1"/>
<accession>P0A5W7</accession>
<accession>A0A1R3Y4D2</accession>
<accession>O08382</accession>
<accession>P45810</accession>
<accession>X2BPN4</accession>
<comment type="similarity">
    <text evidence="1">Belongs to the bacterial ribosomal protein bL36 family.</text>
</comment>
<gene>
    <name type="primary">rpmJ</name>
    <name type="ordered locus">BQ2027_MB3490C</name>
</gene>